<gene>
    <name evidence="7" type="primary">putB</name>
    <name type="synonym">ycgM</name>
    <name type="ordered locus">BSU03200</name>
</gene>
<feature type="chain" id="PRO_0000361669" description="Proline dehydrogenase 2">
    <location>
        <begin position="1"/>
        <end position="303"/>
    </location>
</feature>
<feature type="active site" evidence="2">
    <location>
        <position position="130"/>
    </location>
</feature>
<feature type="active site" evidence="2">
    <location>
        <position position="180"/>
    </location>
</feature>
<feature type="binding site" evidence="3">
    <location>
        <position position="96"/>
    </location>
    <ligand>
        <name>substrate</name>
    </ligand>
</feature>
<feature type="binding site" evidence="2">
    <location>
        <position position="131"/>
    </location>
    <ligand>
        <name>FAD</name>
        <dbReference type="ChEBI" id="CHEBI:57692"/>
    </ligand>
</feature>
<feature type="binding site" evidence="2">
    <location>
        <position position="159"/>
    </location>
    <ligand>
        <name>FAD</name>
        <dbReference type="ChEBI" id="CHEBI:57692"/>
    </ligand>
</feature>
<feature type="binding site" evidence="2">
    <location>
        <begin position="183"/>
        <end position="185"/>
    </location>
    <ligand>
        <name>FAD</name>
        <dbReference type="ChEBI" id="CHEBI:57692"/>
    </ligand>
</feature>
<feature type="binding site" evidence="2">
    <location>
        <begin position="222"/>
        <end position="223"/>
    </location>
    <ligand>
        <name>FAD</name>
        <dbReference type="ChEBI" id="CHEBI:57692"/>
    </ligand>
</feature>
<feature type="binding site" evidence="3">
    <location>
        <begin position="284"/>
        <end position="285"/>
    </location>
    <ligand>
        <name>substrate</name>
    </ligand>
</feature>
<feature type="site" description="Critical for catalytic activity" evidence="2">
    <location>
        <position position="271"/>
    </location>
</feature>
<accession>P94390</accession>
<accession>Q797Q5</accession>
<reference key="1">
    <citation type="journal article" date="1996" name="Microbiology">
        <title>The 25 degrees-36 degrees region of the Bacillus subtilis chromosome: determination of the sequence of a 146 kb segment and identification of 113 genes.</title>
        <authorList>
            <person name="Yamane K."/>
            <person name="Kumano M."/>
            <person name="Kurita K."/>
        </authorList>
    </citation>
    <scope>NUCLEOTIDE SEQUENCE [GENOMIC DNA]</scope>
    <source>
        <strain>168</strain>
    </source>
</reference>
<reference key="2">
    <citation type="journal article" date="1997" name="Nature">
        <title>The complete genome sequence of the Gram-positive bacterium Bacillus subtilis.</title>
        <authorList>
            <person name="Kunst F."/>
            <person name="Ogasawara N."/>
            <person name="Moszer I."/>
            <person name="Albertini A.M."/>
            <person name="Alloni G."/>
            <person name="Azevedo V."/>
            <person name="Bertero M.G."/>
            <person name="Bessieres P."/>
            <person name="Bolotin A."/>
            <person name="Borchert S."/>
            <person name="Borriss R."/>
            <person name="Boursier L."/>
            <person name="Brans A."/>
            <person name="Braun M."/>
            <person name="Brignell S.C."/>
            <person name="Bron S."/>
            <person name="Brouillet S."/>
            <person name="Bruschi C.V."/>
            <person name="Caldwell B."/>
            <person name="Capuano V."/>
            <person name="Carter N.M."/>
            <person name="Choi S.-K."/>
            <person name="Codani J.-J."/>
            <person name="Connerton I.F."/>
            <person name="Cummings N.J."/>
            <person name="Daniel R.A."/>
            <person name="Denizot F."/>
            <person name="Devine K.M."/>
            <person name="Duesterhoeft A."/>
            <person name="Ehrlich S.D."/>
            <person name="Emmerson P.T."/>
            <person name="Entian K.-D."/>
            <person name="Errington J."/>
            <person name="Fabret C."/>
            <person name="Ferrari E."/>
            <person name="Foulger D."/>
            <person name="Fritz C."/>
            <person name="Fujita M."/>
            <person name="Fujita Y."/>
            <person name="Fuma S."/>
            <person name="Galizzi A."/>
            <person name="Galleron N."/>
            <person name="Ghim S.-Y."/>
            <person name="Glaser P."/>
            <person name="Goffeau A."/>
            <person name="Golightly E.J."/>
            <person name="Grandi G."/>
            <person name="Guiseppi G."/>
            <person name="Guy B.J."/>
            <person name="Haga K."/>
            <person name="Haiech J."/>
            <person name="Harwood C.R."/>
            <person name="Henaut A."/>
            <person name="Hilbert H."/>
            <person name="Holsappel S."/>
            <person name="Hosono S."/>
            <person name="Hullo M.-F."/>
            <person name="Itaya M."/>
            <person name="Jones L.-M."/>
            <person name="Joris B."/>
            <person name="Karamata D."/>
            <person name="Kasahara Y."/>
            <person name="Klaerr-Blanchard M."/>
            <person name="Klein C."/>
            <person name="Kobayashi Y."/>
            <person name="Koetter P."/>
            <person name="Koningstein G."/>
            <person name="Krogh S."/>
            <person name="Kumano M."/>
            <person name="Kurita K."/>
            <person name="Lapidus A."/>
            <person name="Lardinois S."/>
            <person name="Lauber J."/>
            <person name="Lazarevic V."/>
            <person name="Lee S.-M."/>
            <person name="Levine A."/>
            <person name="Liu H."/>
            <person name="Masuda S."/>
            <person name="Mauel C."/>
            <person name="Medigue C."/>
            <person name="Medina N."/>
            <person name="Mellado R.P."/>
            <person name="Mizuno M."/>
            <person name="Moestl D."/>
            <person name="Nakai S."/>
            <person name="Noback M."/>
            <person name="Noone D."/>
            <person name="O'Reilly M."/>
            <person name="Ogawa K."/>
            <person name="Ogiwara A."/>
            <person name="Oudega B."/>
            <person name="Park S.-H."/>
            <person name="Parro V."/>
            <person name="Pohl T.M."/>
            <person name="Portetelle D."/>
            <person name="Porwollik S."/>
            <person name="Prescott A.M."/>
            <person name="Presecan E."/>
            <person name="Pujic P."/>
            <person name="Purnelle B."/>
            <person name="Rapoport G."/>
            <person name="Rey M."/>
            <person name="Reynolds S."/>
            <person name="Rieger M."/>
            <person name="Rivolta C."/>
            <person name="Rocha E."/>
            <person name="Roche B."/>
            <person name="Rose M."/>
            <person name="Sadaie Y."/>
            <person name="Sato T."/>
            <person name="Scanlan E."/>
            <person name="Schleich S."/>
            <person name="Schroeter R."/>
            <person name="Scoffone F."/>
            <person name="Sekiguchi J."/>
            <person name="Sekowska A."/>
            <person name="Seror S.J."/>
            <person name="Serror P."/>
            <person name="Shin B.-S."/>
            <person name="Soldo B."/>
            <person name="Sorokin A."/>
            <person name="Tacconi E."/>
            <person name="Takagi T."/>
            <person name="Takahashi H."/>
            <person name="Takemaru K."/>
            <person name="Takeuchi M."/>
            <person name="Tamakoshi A."/>
            <person name="Tanaka T."/>
            <person name="Terpstra P."/>
            <person name="Tognoni A."/>
            <person name="Tosato V."/>
            <person name="Uchiyama S."/>
            <person name="Vandenbol M."/>
            <person name="Vannier F."/>
            <person name="Vassarotti A."/>
            <person name="Viari A."/>
            <person name="Wambutt R."/>
            <person name="Wedler E."/>
            <person name="Wedler H."/>
            <person name="Weitzenegger T."/>
            <person name="Winters P."/>
            <person name="Wipat A."/>
            <person name="Yamamoto H."/>
            <person name="Yamane K."/>
            <person name="Yasumoto K."/>
            <person name="Yata K."/>
            <person name="Yoshida K."/>
            <person name="Yoshikawa H.-F."/>
            <person name="Zumstein E."/>
            <person name="Yoshikawa H."/>
            <person name="Danchin A."/>
        </authorList>
    </citation>
    <scope>NUCLEOTIDE SEQUENCE [LARGE SCALE GENOMIC DNA]</scope>
    <source>
        <strain>168</strain>
    </source>
</reference>
<reference key="3">
    <citation type="journal article" date="2011" name="J. Mol. Biol.">
        <title>Indirect repression by Bacillus subtilis CodY via displacement of the activator of the proline utilization operon.</title>
        <authorList>
            <person name="Belitsky B.R."/>
        </authorList>
    </citation>
    <scope>INDUCTION</scope>
</reference>
<reference key="4">
    <citation type="journal article" date="2011" name="Microbiology">
        <title>PrcR, a PucR-type transcriptional activator, is essential for proline utilization and mediates proline-responsive expression of the proline utilization operon putBCP in Bacillus subtilis.</title>
        <authorList>
            <person name="Huang S.C."/>
            <person name="Lin T.H."/>
            <person name="Shaw G.C."/>
        </authorList>
    </citation>
    <scope>INDUCTION</scope>
    <source>
        <strain>168</strain>
    </source>
</reference>
<reference key="5">
    <citation type="journal article" date="2012" name="J. Bacteriol.">
        <title>Proline utilization by Bacillus subtilis: uptake and catabolism.</title>
        <authorList>
            <person name="Moses S."/>
            <person name="Sinner T."/>
            <person name="Zaprasis A."/>
            <person name="Stoeveken N."/>
            <person name="Hoffmann T."/>
            <person name="Belitsky B.R."/>
            <person name="Sonenshein A.L."/>
            <person name="Bremer E."/>
        </authorList>
    </citation>
    <scope>FUNCTION</scope>
    <scope>CATALYTIC ACTIVITY</scope>
    <scope>PATHWAY</scope>
    <scope>INDUCTION</scope>
    <scope>DISRUPTION PHENOTYPE</scope>
    <source>
        <strain>168 / JH642</strain>
    </source>
</reference>
<protein>
    <recommendedName>
        <fullName evidence="8">Proline dehydrogenase 2</fullName>
        <shortName evidence="8">PRODH 2</shortName>
        <ecNumber evidence="6">1.5.5.2</ecNumber>
    </recommendedName>
    <alternativeName>
        <fullName evidence="8">Proline oxidase 2</fullName>
    </alternativeName>
</protein>
<organism>
    <name type="scientific">Bacillus subtilis (strain 168)</name>
    <dbReference type="NCBI Taxonomy" id="224308"/>
    <lineage>
        <taxon>Bacteria</taxon>
        <taxon>Bacillati</taxon>
        <taxon>Bacillota</taxon>
        <taxon>Bacilli</taxon>
        <taxon>Bacillales</taxon>
        <taxon>Bacillaceae</taxon>
        <taxon>Bacillus</taxon>
    </lineage>
</organism>
<dbReference type="EC" id="1.5.5.2" evidence="6"/>
<dbReference type="EMBL" id="D50453">
    <property type="protein sequence ID" value="BAA08954.1"/>
    <property type="molecule type" value="Genomic_DNA"/>
</dbReference>
<dbReference type="EMBL" id="AL009126">
    <property type="protein sequence ID" value="CAB12114.1"/>
    <property type="molecule type" value="Genomic_DNA"/>
</dbReference>
<dbReference type="PIR" id="H69758">
    <property type="entry name" value="H69758"/>
</dbReference>
<dbReference type="RefSeq" id="NP_388202.1">
    <property type="nucleotide sequence ID" value="NC_000964.3"/>
</dbReference>
<dbReference type="RefSeq" id="WP_003246421.1">
    <property type="nucleotide sequence ID" value="NZ_OZ025638.1"/>
</dbReference>
<dbReference type="SMR" id="P94390"/>
<dbReference type="FunCoup" id="P94390">
    <property type="interactions" value="38"/>
</dbReference>
<dbReference type="STRING" id="224308.BSU03200"/>
<dbReference type="PaxDb" id="224308-BSU03200"/>
<dbReference type="EnsemblBacteria" id="CAB12114">
    <property type="protein sequence ID" value="CAB12114"/>
    <property type="gene ID" value="BSU_03200"/>
</dbReference>
<dbReference type="GeneID" id="938338"/>
<dbReference type="KEGG" id="bsu:BSU03200"/>
<dbReference type="PATRIC" id="fig|224308.43.peg.328"/>
<dbReference type="eggNOG" id="COG0506">
    <property type="taxonomic scope" value="Bacteria"/>
</dbReference>
<dbReference type="InParanoid" id="P94390"/>
<dbReference type="OrthoDB" id="9773461at2"/>
<dbReference type="PhylomeDB" id="P94390"/>
<dbReference type="BioCyc" id="BSUB:BSU03200-MONOMER"/>
<dbReference type="UniPathway" id="UPA00261">
    <property type="reaction ID" value="UER00373"/>
</dbReference>
<dbReference type="Proteomes" id="UP000001570">
    <property type="component" value="Chromosome"/>
</dbReference>
<dbReference type="GO" id="GO:0071949">
    <property type="term" value="F:FAD binding"/>
    <property type="evidence" value="ECO:0000250"/>
    <property type="project" value="UniProtKB"/>
</dbReference>
<dbReference type="GO" id="GO:0004657">
    <property type="term" value="F:proline dehydrogenase activity"/>
    <property type="evidence" value="ECO:0000314"/>
    <property type="project" value="UniProtKB"/>
</dbReference>
<dbReference type="GO" id="GO:0006562">
    <property type="term" value="P:proline catabolic process"/>
    <property type="evidence" value="ECO:0000314"/>
    <property type="project" value="UniProtKB"/>
</dbReference>
<dbReference type="GO" id="GO:0010133">
    <property type="term" value="P:proline catabolic process to glutamate"/>
    <property type="evidence" value="ECO:0007669"/>
    <property type="project" value="UniProtKB-UniPathway"/>
</dbReference>
<dbReference type="FunFam" id="3.20.20.220:FF:000027">
    <property type="entry name" value="Proline dehydrogenase 2"/>
    <property type="match status" value="1"/>
</dbReference>
<dbReference type="Gene3D" id="3.20.20.220">
    <property type="match status" value="1"/>
</dbReference>
<dbReference type="InterPro" id="IPR029041">
    <property type="entry name" value="FAD-linked_oxidoreductase-like"/>
</dbReference>
<dbReference type="InterPro" id="IPR008219">
    <property type="entry name" value="PRODH_bac_arc"/>
</dbReference>
<dbReference type="InterPro" id="IPR002872">
    <property type="entry name" value="Proline_DH_dom"/>
</dbReference>
<dbReference type="InterPro" id="IPR015659">
    <property type="entry name" value="Proline_oxidase"/>
</dbReference>
<dbReference type="PANTHER" id="PTHR13914:SF0">
    <property type="entry name" value="PROLINE DEHYDROGENASE 1, MITOCHONDRIAL"/>
    <property type="match status" value="1"/>
</dbReference>
<dbReference type="PANTHER" id="PTHR13914">
    <property type="entry name" value="PROLINE OXIDASE"/>
    <property type="match status" value="1"/>
</dbReference>
<dbReference type="Pfam" id="PF01619">
    <property type="entry name" value="Pro_dh"/>
    <property type="match status" value="1"/>
</dbReference>
<dbReference type="PIRSF" id="PIRSF000196">
    <property type="entry name" value="Pro_dehydrog"/>
    <property type="match status" value="1"/>
</dbReference>
<dbReference type="SUPFAM" id="SSF51730">
    <property type="entry name" value="FAD-linked oxidoreductase"/>
    <property type="match status" value="1"/>
</dbReference>
<keyword id="KW-0274">FAD</keyword>
<keyword id="KW-0285">Flavoprotein</keyword>
<keyword id="KW-0547">Nucleotide-binding</keyword>
<keyword id="KW-0560">Oxidoreductase</keyword>
<keyword id="KW-0642">Proline metabolism</keyword>
<keyword id="KW-1185">Reference proteome</keyword>
<sequence length="303" mass="35046">MITRDFFLFLSKSGFLNKMARNWGSRVAAGKIIGGNDFNSSIPTIRQLNSQGLSVTVDHLGEFVNSAEVARERTEECIQTIATIADQELNSHVSLKMTSLGLDIDMDLVYENMTKILQTAEKHKIMVTIDMEDEVRCQKTLDIFKDFRKKYEHVSTVLQAYLYRTEKDIDDLDSLNPFLRLVKGAYKESEKVAFPEKSDVDENYKKIIRKQLLNGHYTAIATHDDKMIDFTKQLAKEHGIANDKFEFQMLYGMRSQTQLSLVKEGYNMRVYLPYGEDWYGYFMRRLAERPSNIAFAFKGMTKK</sequence>
<name>PROD2_BACSU</name>
<comment type="function">
    <text evidence="6">Converts proline to delta-1-pyrroline-5-carboxylate. Important for the use of proline as a sole carbon and energy source or a sole nitrogen source.</text>
</comment>
<comment type="catalytic activity">
    <reaction evidence="6">
        <text>L-proline + a quinone = (S)-1-pyrroline-5-carboxylate + a quinol + H(+)</text>
        <dbReference type="Rhea" id="RHEA:23784"/>
        <dbReference type="ChEBI" id="CHEBI:15378"/>
        <dbReference type="ChEBI" id="CHEBI:17388"/>
        <dbReference type="ChEBI" id="CHEBI:24646"/>
        <dbReference type="ChEBI" id="CHEBI:60039"/>
        <dbReference type="ChEBI" id="CHEBI:132124"/>
        <dbReference type="EC" id="1.5.5.2"/>
    </reaction>
</comment>
<comment type="cofactor">
    <cofactor evidence="1">
        <name>FAD</name>
        <dbReference type="ChEBI" id="CHEBI:57692"/>
    </cofactor>
</comment>
<comment type="pathway">
    <text evidence="6">Amino-acid degradation; L-proline degradation into L-glutamate; L-glutamate from L-proline: step 1/2.</text>
</comment>
<comment type="induction">
    <text evidence="4 5 6">The expression of the putBCP operon is induced in a PutR-dependent fashion by very low concentrations of L-proline in the growth medium. CodY represses the operon by displacing PutR from DNA.</text>
</comment>
<comment type="disruption phenotype">
    <text evidence="6">Deletion of the putBCP operon abolishes L-proline utilization.</text>
</comment>
<comment type="similarity">
    <text evidence="8">Belongs to the proline dehydrogenase family.</text>
</comment>
<proteinExistence type="evidence at protein level"/>
<evidence type="ECO:0000250" key="1"/>
<evidence type="ECO:0000250" key="2">
    <source>
        <dbReference type="UniProtKB" id="Q72IB8"/>
    </source>
</evidence>
<evidence type="ECO:0000250" key="3">
    <source>
        <dbReference type="UniProtKB" id="Q9RW55"/>
    </source>
</evidence>
<evidence type="ECO:0000269" key="4">
    <source>
    </source>
</evidence>
<evidence type="ECO:0000269" key="5">
    <source>
    </source>
</evidence>
<evidence type="ECO:0000269" key="6">
    <source>
    </source>
</evidence>
<evidence type="ECO:0000303" key="7">
    <source>
    </source>
</evidence>
<evidence type="ECO:0000305" key="8"/>